<sequence>MDSHTLIQALIYLGSAALIVPIAVRLGLGSVLGYLIAGCIIGPWGLRLVTDAESILHFAEIGVVLMLFIIGLELDPQRLWKLRAAVFGGGALQMVICGGLLGLFCMLLGLRWQVAELIGMTLALSSTAIAMQAMNERNLMVTQMGRSAFAVLLFQDIAAIPLVAMIPLLATSSASTTMGAFALSALKVAGALVLVVLLGRYVTRPALRFVARSGLREVFSAVALFLVFGFGLLLEEVGLSMAMGAFLAGVLLASSEYRHALESDIEPFKGLLLGLFFIGVGMSIDFGTLLENPLRIVILLLGFLIIKIAMLWLIARPLQVPNKQRRWFAVLLGQGSEFAFVVFGAAQMANVLEPEWAKSLTLAVALSMAATPILLVILNRLEQSSTEEAREADEIDEEQPRVIIAGFGRFGQITGRLLLSSGVKMVVLDHDPDHIETLRKFGMKVFYGDATRMDLLESAGAAKAEVLINAIDDPQTNLQLTEMVKEHFPHLQIIARARDVDHYIRLRQAGVEKPERETFEGALKTGRLALESLGLGPYEARERADVFRRFNIQMVEEMAMVENDTKARAAVYKRTSAMLSEIITEDREHLSLIQRHGWQGTEEGKHTGNMADEPETKPSS</sequence>
<protein>
    <recommendedName>
        <fullName evidence="1">Glutathione-regulated potassium-efflux system protein KefC</fullName>
    </recommendedName>
    <alternativeName>
        <fullName evidence="1">K(+)/H(+) antiporter</fullName>
    </alternativeName>
</protein>
<comment type="function">
    <text evidence="1">Pore-forming subunit of a potassium efflux system that confers protection against electrophiles. Catalyzes K(+)/H(+) antiport.</text>
</comment>
<comment type="subunit">
    <text evidence="1">Homodimer. Interacts with the regulatory subunit KefF.</text>
</comment>
<comment type="subcellular location">
    <subcellularLocation>
        <location evidence="1">Cell inner membrane</location>
        <topology evidence="1">Multi-pass membrane protein</topology>
    </subcellularLocation>
</comment>
<comment type="similarity">
    <text evidence="1">Belongs to the monovalent cation:proton antiporter 2 (CPA2) transporter (TC 2.A.37) family. KefC subfamily.</text>
</comment>
<evidence type="ECO:0000255" key="1">
    <source>
        <dbReference type="HAMAP-Rule" id="MF_01413"/>
    </source>
</evidence>
<evidence type="ECO:0000255" key="2">
    <source>
        <dbReference type="PROSITE-ProRule" id="PRU00543"/>
    </source>
</evidence>
<evidence type="ECO:0000256" key="3">
    <source>
        <dbReference type="SAM" id="MobiDB-lite"/>
    </source>
</evidence>
<proteinExistence type="inferred from homology"/>
<name>KEFC_ECOSE</name>
<organism>
    <name type="scientific">Escherichia coli (strain SE11)</name>
    <dbReference type="NCBI Taxonomy" id="409438"/>
    <lineage>
        <taxon>Bacteria</taxon>
        <taxon>Pseudomonadati</taxon>
        <taxon>Pseudomonadota</taxon>
        <taxon>Gammaproteobacteria</taxon>
        <taxon>Enterobacterales</taxon>
        <taxon>Enterobacteriaceae</taxon>
        <taxon>Escherichia</taxon>
    </lineage>
</organism>
<accession>B6HZ28</accession>
<reference key="1">
    <citation type="journal article" date="2008" name="DNA Res.">
        <title>Complete genome sequence and comparative analysis of the wild-type commensal Escherichia coli strain SE11 isolated from a healthy adult.</title>
        <authorList>
            <person name="Oshima K."/>
            <person name="Toh H."/>
            <person name="Ogura Y."/>
            <person name="Sasamoto H."/>
            <person name="Morita H."/>
            <person name="Park S.-H."/>
            <person name="Ooka T."/>
            <person name="Iyoda S."/>
            <person name="Taylor T.D."/>
            <person name="Hayashi T."/>
            <person name="Itoh K."/>
            <person name="Hattori M."/>
        </authorList>
    </citation>
    <scope>NUCLEOTIDE SEQUENCE [LARGE SCALE GENOMIC DNA]</scope>
    <source>
        <strain>SE11</strain>
    </source>
</reference>
<dbReference type="EMBL" id="AP009240">
    <property type="protein sequence ID" value="BAG75572.1"/>
    <property type="molecule type" value="Genomic_DNA"/>
</dbReference>
<dbReference type="RefSeq" id="WP_000377129.1">
    <property type="nucleotide sequence ID" value="NC_011415.1"/>
</dbReference>
<dbReference type="SMR" id="B6HZ28"/>
<dbReference type="KEGG" id="ecy:ECSE_0048"/>
<dbReference type="HOGENOM" id="CLU_005126_9_3_6"/>
<dbReference type="Proteomes" id="UP000008199">
    <property type="component" value="Chromosome"/>
</dbReference>
<dbReference type="GO" id="GO:0005886">
    <property type="term" value="C:plasma membrane"/>
    <property type="evidence" value="ECO:0007669"/>
    <property type="project" value="UniProtKB-SubCell"/>
</dbReference>
<dbReference type="GO" id="GO:0019899">
    <property type="term" value="F:enzyme binding"/>
    <property type="evidence" value="ECO:0007669"/>
    <property type="project" value="InterPro"/>
</dbReference>
<dbReference type="GO" id="GO:0015503">
    <property type="term" value="F:glutathione-regulated potassium exporter activity"/>
    <property type="evidence" value="ECO:0007669"/>
    <property type="project" value="UniProtKB-UniRule"/>
</dbReference>
<dbReference type="GO" id="GO:0015643">
    <property type="term" value="F:toxic substance binding"/>
    <property type="evidence" value="ECO:0007669"/>
    <property type="project" value="InterPro"/>
</dbReference>
<dbReference type="GO" id="GO:1902600">
    <property type="term" value="P:proton transmembrane transport"/>
    <property type="evidence" value="ECO:0007669"/>
    <property type="project" value="InterPro"/>
</dbReference>
<dbReference type="GO" id="GO:0051595">
    <property type="term" value="P:response to methylglyoxal"/>
    <property type="evidence" value="ECO:0007669"/>
    <property type="project" value="InterPro"/>
</dbReference>
<dbReference type="FunFam" id="1.20.1530.20:FF:000001">
    <property type="entry name" value="Glutathione-regulated potassium-efflux system protein KefB"/>
    <property type="match status" value="1"/>
</dbReference>
<dbReference type="FunFam" id="3.40.50.720:FF:000036">
    <property type="entry name" value="Glutathione-regulated potassium-efflux system protein KefB"/>
    <property type="match status" value="1"/>
</dbReference>
<dbReference type="Gene3D" id="1.20.1530.20">
    <property type="match status" value="1"/>
</dbReference>
<dbReference type="Gene3D" id="3.40.50.720">
    <property type="entry name" value="NAD(P)-binding Rossmann-like Domain"/>
    <property type="match status" value="1"/>
</dbReference>
<dbReference type="HAMAP" id="MF_01413">
    <property type="entry name" value="K_H_efflux_KefC"/>
    <property type="match status" value="1"/>
</dbReference>
<dbReference type="InterPro" id="IPR006153">
    <property type="entry name" value="Cation/H_exchanger_TM"/>
</dbReference>
<dbReference type="InterPro" id="IPR004771">
    <property type="entry name" value="K/H_exchanger"/>
</dbReference>
<dbReference type="InterPro" id="IPR023941">
    <property type="entry name" value="K_H_efflux_KefC"/>
</dbReference>
<dbReference type="InterPro" id="IPR006036">
    <property type="entry name" value="K_uptake_TrkA"/>
</dbReference>
<dbReference type="InterPro" id="IPR038770">
    <property type="entry name" value="Na+/solute_symporter_sf"/>
</dbReference>
<dbReference type="InterPro" id="IPR036291">
    <property type="entry name" value="NAD(P)-bd_dom_sf"/>
</dbReference>
<dbReference type="InterPro" id="IPR003148">
    <property type="entry name" value="RCK_N"/>
</dbReference>
<dbReference type="NCBIfam" id="TIGR00932">
    <property type="entry name" value="2a37"/>
    <property type="match status" value="1"/>
</dbReference>
<dbReference type="NCBIfam" id="NF002924">
    <property type="entry name" value="PRK03562.1"/>
    <property type="match status" value="1"/>
</dbReference>
<dbReference type="PANTHER" id="PTHR46157:SF3">
    <property type="entry name" value="GLUTATHIONE-REGULATED POTASSIUM-EFFLUX SYSTEM PROTEIN KEFC"/>
    <property type="match status" value="1"/>
</dbReference>
<dbReference type="PANTHER" id="PTHR46157">
    <property type="entry name" value="K(+) EFFLUX ANTIPORTER 3, CHLOROPLASTIC"/>
    <property type="match status" value="1"/>
</dbReference>
<dbReference type="Pfam" id="PF00999">
    <property type="entry name" value="Na_H_Exchanger"/>
    <property type="match status" value="1"/>
</dbReference>
<dbReference type="Pfam" id="PF02254">
    <property type="entry name" value="TrkA_N"/>
    <property type="match status" value="1"/>
</dbReference>
<dbReference type="PRINTS" id="PR00335">
    <property type="entry name" value="KUPTAKETRKA"/>
</dbReference>
<dbReference type="SUPFAM" id="SSF51735">
    <property type="entry name" value="NAD(P)-binding Rossmann-fold domains"/>
    <property type="match status" value="1"/>
</dbReference>
<dbReference type="PROSITE" id="PS51201">
    <property type="entry name" value="RCK_N"/>
    <property type="match status" value="1"/>
</dbReference>
<keyword id="KW-0050">Antiport</keyword>
<keyword id="KW-0997">Cell inner membrane</keyword>
<keyword id="KW-1003">Cell membrane</keyword>
<keyword id="KW-0406">Ion transport</keyword>
<keyword id="KW-0472">Membrane</keyword>
<keyword id="KW-0630">Potassium</keyword>
<keyword id="KW-0633">Potassium transport</keyword>
<keyword id="KW-0812">Transmembrane</keyword>
<keyword id="KW-1133">Transmembrane helix</keyword>
<keyword id="KW-0813">Transport</keyword>
<feature type="chain" id="PRO_1000145541" description="Glutathione-regulated potassium-efflux system protein KefC">
    <location>
        <begin position="1"/>
        <end position="620"/>
    </location>
</feature>
<feature type="transmembrane region" description="Helical" evidence="1">
    <location>
        <begin position="4"/>
        <end position="24"/>
    </location>
</feature>
<feature type="transmembrane region" description="Helical" evidence="1">
    <location>
        <begin position="26"/>
        <end position="46"/>
    </location>
</feature>
<feature type="transmembrane region" description="Helical" evidence="1">
    <location>
        <begin position="54"/>
        <end position="74"/>
    </location>
</feature>
<feature type="transmembrane region" description="Helical" evidence="1">
    <location>
        <begin position="90"/>
        <end position="110"/>
    </location>
</feature>
<feature type="transmembrane region" description="Helical" evidence="1">
    <location>
        <begin position="114"/>
        <end position="134"/>
    </location>
</feature>
<feature type="transmembrane region" description="Helical" evidence="1">
    <location>
        <begin position="149"/>
        <end position="169"/>
    </location>
</feature>
<feature type="transmembrane region" description="Helical" evidence="1">
    <location>
        <begin position="178"/>
        <end position="198"/>
    </location>
</feature>
<feature type="transmembrane region" description="Helical" evidence="1">
    <location>
        <begin position="218"/>
        <end position="238"/>
    </location>
</feature>
<feature type="transmembrane region" description="Helical" evidence="1">
    <location>
        <begin position="270"/>
        <end position="290"/>
    </location>
</feature>
<feature type="transmembrane region" description="Helical" evidence="1">
    <location>
        <begin position="294"/>
        <end position="314"/>
    </location>
</feature>
<feature type="transmembrane region" description="Helical" evidence="1">
    <location>
        <begin position="327"/>
        <end position="347"/>
    </location>
</feature>
<feature type="transmembrane region" description="Helical" evidence="1">
    <location>
        <begin position="359"/>
        <end position="379"/>
    </location>
</feature>
<feature type="domain" description="RCK N-terminal" evidence="2">
    <location>
        <begin position="399"/>
        <end position="518"/>
    </location>
</feature>
<feature type="region of interest" description="Disordered" evidence="3">
    <location>
        <begin position="597"/>
        <end position="620"/>
    </location>
</feature>
<gene>
    <name evidence="1" type="primary">kefC</name>
    <name type="ordered locus">ECSE_0048</name>
</gene>